<comment type="function">
    <text>Required for transposition of transposon Tn5271.</text>
</comment>
<comment type="similarity">
    <text evidence="1">Belongs to the transposase 7 family.</text>
</comment>
<reference key="1">
    <citation type="journal article" date="1991" name="Proc. Natl. Acad. Sci. U.S.A.">
        <title>Chlorobenzoate catabolic transposon Tn5271 is a composite class I element with flanking class II insertion sequences.</title>
        <authorList>
            <person name="Nakatsu C.H."/>
            <person name="Ng J."/>
            <person name="Singh R."/>
            <person name="Straus N.A."/>
            <person name="Wybdgan C."/>
        </authorList>
    </citation>
    <scope>NUCLEOTIDE SEQUENCE [GENOMIC DNA]</scope>
    <source>
        <strain>BR60 / Isolate Bloody Run creek</strain>
    </source>
</reference>
<protein>
    <recommendedName>
        <fullName>Transposase for insertion sequence element IS1071 in transposon Tn5271</fullName>
    </recommendedName>
</protein>
<accession>Q04222</accession>
<evidence type="ECO:0000305" key="1"/>
<feature type="chain" id="PRO_0000075424" description="Transposase for insertion sequence element IS1071 in transposon Tn5271">
    <location>
        <begin position="1"/>
        <end position="970"/>
    </location>
</feature>
<organism>
    <name type="scientific">Comamonas testosteroni</name>
    <name type="common">Pseudomonas testosteroni</name>
    <dbReference type="NCBI Taxonomy" id="285"/>
    <lineage>
        <taxon>Bacteria</taxon>
        <taxon>Pseudomonadati</taxon>
        <taxon>Pseudomonadota</taxon>
        <taxon>Betaproteobacteria</taxon>
        <taxon>Burkholderiales</taxon>
        <taxon>Comamonadaceae</taxon>
        <taxon>Comamonas</taxon>
    </lineage>
</organism>
<sequence length="970" mass="108538">MQGWHTTFLGMRGLPRDISDFEMKAFFTFDGAERDAINARRGDSHKLGLALHIGFLRMSGRLLGAFRVIPVALWRHLGNELGIAAPEVASLRAMYERGRTLFDHQQVACTVLGFQWMSEHQRRSLVRELRDEVAGCDRDQLLVRARQWLYKNKLVIVHERAIRTLIAAALAQLEVETGTAIAASVDPATLDRWRASVSELRPDGQTQQSWLWAAPAKHSTRQISEVLERIDLLYTLDVHKHLADIPDLILRRYARRLVSRPPSAGAKIKEPARTVEVACFLRYCLFTTTDQLILMVQRRIADLWRQAAADVPATVNWAAMYKTLLGELVALSAQGAVPDAELRARLEALITETQKRKPPSRASLVREGLIDGIRPVRSLLVAIAKLPWQATGEHPAIEYLAKLQALYLKGSRKLPVEVVAPSLGMIWQVSISSPDRERAFQALEVATLFALRRAVRNGSVWIEHSLSFRGRARLFFTDERWQAESKKHYARLSLPSKAATFLKPLLARVTAGVDAVAAAARSGVLRVDDELHLSPLPAEDEDPEVTKLRAALDHRIGEVQLPEVILAVDAQVRFSWIMLGREPRSTDELLMVYAGIMAHGTSLTAVECARMIPQLSATSIRQAMRWARDERRLSQACQAVLEFMQRHPIAATWGRSDLASSDMMSMETTKRVWQARLDPRRNTPSIGIYSHVKDRWGIFHAQPFVLNERQAGVAIEGVIRQEKLETSQLAVDTHGYTDFAMSHARLLGFDLCPRLKELKQRHLFVPRGTKVPAEIAAVCEANVDVALIEKHWDSLVHLAASVMSGHASAVAALARFGSAAQGDPIYEAGVQLGRLLRTAFLADYFVKDAFRNELRRVLNRGEAVNALKRAIYTGRISPAQAKRVDEMQAVADALSLMANIVMAWNTSQMQAVLDRWSNRRQVIPPELIGKIAPTRLESINLRGVFRFPVDRYADQILPSRPNASITGTNG</sequence>
<name>TRA1_COMTE</name>
<proteinExistence type="inferred from homology"/>
<dbReference type="EMBL" id="M65135">
    <property type="protein sequence ID" value="AAA70396.1"/>
    <property type="molecule type" value="Genomic_DNA"/>
</dbReference>
<dbReference type="SMR" id="Q04222"/>
<dbReference type="GO" id="GO:0003677">
    <property type="term" value="F:DNA binding"/>
    <property type="evidence" value="ECO:0007669"/>
    <property type="project" value="UniProtKB-KW"/>
</dbReference>
<dbReference type="GO" id="GO:0004803">
    <property type="term" value="F:transposase activity"/>
    <property type="evidence" value="ECO:0007669"/>
    <property type="project" value="InterPro"/>
</dbReference>
<dbReference type="GO" id="GO:0006313">
    <property type="term" value="P:DNA transposition"/>
    <property type="evidence" value="ECO:0007669"/>
    <property type="project" value="InterPro"/>
</dbReference>
<dbReference type="InterPro" id="IPR025296">
    <property type="entry name" value="DUF4158"/>
</dbReference>
<dbReference type="InterPro" id="IPR047653">
    <property type="entry name" value="Tn3-like_transpos"/>
</dbReference>
<dbReference type="InterPro" id="IPR002513">
    <property type="entry name" value="Tn3_Tnp_DDE_dom"/>
</dbReference>
<dbReference type="NCBIfam" id="NF033527">
    <property type="entry name" value="transpos_Tn3"/>
    <property type="match status" value="1"/>
</dbReference>
<dbReference type="Pfam" id="PF01526">
    <property type="entry name" value="DDE_Tnp_Tn3"/>
    <property type="match status" value="1"/>
</dbReference>
<dbReference type="Pfam" id="PF13700">
    <property type="entry name" value="DUF4158"/>
    <property type="match status" value="1"/>
</dbReference>
<keyword id="KW-0233">DNA recombination</keyword>
<keyword id="KW-0238">DNA-binding</keyword>
<keyword id="KW-0814">Transposable element</keyword>
<keyword id="KW-0815">Transposition</keyword>